<name>SYM_BURVG</name>
<keyword id="KW-0030">Aminoacyl-tRNA synthetase</keyword>
<keyword id="KW-0067">ATP-binding</keyword>
<keyword id="KW-0963">Cytoplasm</keyword>
<keyword id="KW-0436">Ligase</keyword>
<keyword id="KW-0479">Metal-binding</keyword>
<keyword id="KW-0547">Nucleotide-binding</keyword>
<keyword id="KW-0648">Protein biosynthesis</keyword>
<keyword id="KW-0694">RNA-binding</keyword>
<keyword id="KW-0820">tRNA-binding</keyword>
<keyword id="KW-0862">Zinc</keyword>
<protein>
    <recommendedName>
        <fullName evidence="1">Methionine--tRNA ligase</fullName>
        <ecNumber evidence="1">6.1.1.10</ecNumber>
    </recommendedName>
    <alternativeName>
        <fullName evidence="1">Methionyl-tRNA synthetase</fullName>
        <shortName evidence="1">MetRS</shortName>
    </alternativeName>
</protein>
<sequence length="721" mass="79132">MSATDLASVQAAAPQGSRQILVTSALPYANGQIHIGHLVEYIQTDIWVRTLRMHGHEVYYIGADDTHGTPIMLRAEMEGLTPKQLIDRVWAEHKRDFDSFGVSFDNFYSTDSDENRVLSEKIYVALKENGLIAEREIEQAYDPVKEMFLPDRFIKGECPKCHAKDQYGDSCEVCGSTYLPTDLLNPYSVVSGATPVRKTSTHHFFRLSDPRCESFLRDWVSGLAQPEATNKMREWLGDAGEAKLADWDISRDAPYFGFEIPGAPGKYFYVWLDAPVGYYASFKNLCERKGINFDAWVRPGATAEQYHFIGKDILYFHTLFWPAMLEFSGHRTPTNVFAHGFLTVDGAKMSKSRGTFITAQSYIDTGLNPEWLRYYFAAKLNATMEDIDLNLDDFQARVNSDLVGKYVNIASRAAGFLIKRFDGRVQDSAMNHPLVAKLRSAIDSIAAHYEAREYSRALRQTMELADEVNAYVDGAKPWELAKDPANAVALHETCSVSLEAFRLLSLALKPVMPRVAQAVEAFFGIAPLAWADAAKPLSSAQPINAYQHLMTRVDAKQIDALLAANRGSLQADGAAAAAASGATGAAAAKDAKPAKANAKAAAANAANDGPISIDDFAKIDLRIAKIVACQAVEGSDKLLQLTLDVGEEKTRNVFSGIKSAYQPEQLVGKLTVMVANLAPRKMKFGLSEGMVLAASAADEKAEPGLYILEPHSGAKPGMRVK</sequence>
<proteinExistence type="inferred from homology"/>
<accession>A4JGW6</accession>
<reference key="1">
    <citation type="submission" date="2007-03" db="EMBL/GenBank/DDBJ databases">
        <title>Complete sequence of chromosome 1 of Burkholderia vietnamiensis G4.</title>
        <authorList>
            <consortium name="US DOE Joint Genome Institute"/>
            <person name="Copeland A."/>
            <person name="Lucas S."/>
            <person name="Lapidus A."/>
            <person name="Barry K."/>
            <person name="Detter J.C."/>
            <person name="Glavina del Rio T."/>
            <person name="Hammon N."/>
            <person name="Israni S."/>
            <person name="Dalin E."/>
            <person name="Tice H."/>
            <person name="Pitluck S."/>
            <person name="Chain P."/>
            <person name="Malfatti S."/>
            <person name="Shin M."/>
            <person name="Vergez L."/>
            <person name="Schmutz J."/>
            <person name="Larimer F."/>
            <person name="Land M."/>
            <person name="Hauser L."/>
            <person name="Kyrpides N."/>
            <person name="Tiedje J."/>
            <person name="Richardson P."/>
        </authorList>
    </citation>
    <scope>NUCLEOTIDE SEQUENCE [LARGE SCALE GENOMIC DNA]</scope>
    <source>
        <strain>G4 / LMG 22486</strain>
    </source>
</reference>
<feature type="chain" id="PRO_0000331798" description="Methionine--tRNA ligase">
    <location>
        <begin position="1"/>
        <end position="721"/>
    </location>
</feature>
<feature type="domain" description="tRNA-binding" evidence="1">
    <location>
        <begin position="615"/>
        <end position="721"/>
    </location>
</feature>
<feature type="short sequence motif" description="'HIGH' region">
    <location>
        <begin position="27"/>
        <end position="37"/>
    </location>
</feature>
<feature type="short sequence motif" description="'KMSKS' region">
    <location>
        <begin position="348"/>
        <end position="352"/>
    </location>
</feature>
<feature type="binding site" evidence="1">
    <location>
        <position position="158"/>
    </location>
    <ligand>
        <name>Zn(2+)</name>
        <dbReference type="ChEBI" id="CHEBI:29105"/>
    </ligand>
</feature>
<feature type="binding site" evidence="1">
    <location>
        <position position="161"/>
    </location>
    <ligand>
        <name>Zn(2+)</name>
        <dbReference type="ChEBI" id="CHEBI:29105"/>
    </ligand>
</feature>
<feature type="binding site" evidence="1">
    <location>
        <position position="171"/>
    </location>
    <ligand>
        <name>Zn(2+)</name>
        <dbReference type="ChEBI" id="CHEBI:29105"/>
    </ligand>
</feature>
<feature type="binding site" evidence="1">
    <location>
        <position position="174"/>
    </location>
    <ligand>
        <name>Zn(2+)</name>
        <dbReference type="ChEBI" id="CHEBI:29105"/>
    </ligand>
</feature>
<feature type="binding site" evidence="1">
    <location>
        <position position="351"/>
    </location>
    <ligand>
        <name>ATP</name>
        <dbReference type="ChEBI" id="CHEBI:30616"/>
    </ligand>
</feature>
<evidence type="ECO:0000255" key="1">
    <source>
        <dbReference type="HAMAP-Rule" id="MF_00098"/>
    </source>
</evidence>
<gene>
    <name evidence="1" type="primary">metG</name>
    <name type="ordered locus">Bcep1808_2521</name>
</gene>
<comment type="function">
    <text evidence="1">Is required not only for elongation of protein synthesis but also for the initiation of all mRNA translation through initiator tRNA(fMet) aminoacylation.</text>
</comment>
<comment type="catalytic activity">
    <reaction evidence="1">
        <text>tRNA(Met) + L-methionine + ATP = L-methionyl-tRNA(Met) + AMP + diphosphate</text>
        <dbReference type="Rhea" id="RHEA:13481"/>
        <dbReference type="Rhea" id="RHEA-COMP:9667"/>
        <dbReference type="Rhea" id="RHEA-COMP:9698"/>
        <dbReference type="ChEBI" id="CHEBI:30616"/>
        <dbReference type="ChEBI" id="CHEBI:33019"/>
        <dbReference type="ChEBI" id="CHEBI:57844"/>
        <dbReference type="ChEBI" id="CHEBI:78442"/>
        <dbReference type="ChEBI" id="CHEBI:78530"/>
        <dbReference type="ChEBI" id="CHEBI:456215"/>
        <dbReference type="EC" id="6.1.1.10"/>
    </reaction>
</comment>
<comment type="cofactor">
    <cofactor evidence="1">
        <name>Zn(2+)</name>
        <dbReference type="ChEBI" id="CHEBI:29105"/>
    </cofactor>
    <text evidence="1">Binds 1 zinc ion per subunit.</text>
</comment>
<comment type="subunit">
    <text evidence="1">Homodimer.</text>
</comment>
<comment type="subcellular location">
    <subcellularLocation>
        <location evidence="1">Cytoplasm</location>
    </subcellularLocation>
</comment>
<comment type="similarity">
    <text evidence="1">Belongs to the class-I aminoacyl-tRNA synthetase family. MetG type 1 subfamily.</text>
</comment>
<organism>
    <name type="scientific">Burkholderia vietnamiensis (strain G4 / LMG 22486)</name>
    <name type="common">Burkholderia cepacia (strain R1808)</name>
    <dbReference type="NCBI Taxonomy" id="269482"/>
    <lineage>
        <taxon>Bacteria</taxon>
        <taxon>Pseudomonadati</taxon>
        <taxon>Pseudomonadota</taxon>
        <taxon>Betaproteobacteria</taxon>
        <taxon>Burkholderiales</taxon>
        <taxon>Burkholderiaceae</taxon>
        <taxon>Burkholderia</taxon>
        <taxon>Burkholderia cepacia complex</taxon>
    </lineage>
</organism>
<dbReference type="EC" id="6.1.1.10" evidence="1"/>
<dbReference type="EMBL" id="CP000614">
    <property type="protein sequence ID" value="ABO55519.1"/>
    <property type="molecule type" value="Genomic_DNA"/>
</dbReference>
<dbReference type="SMR" id="A4JGW6"/>
<dbReference type="KEGG" id="bvi:Bcep1808_2521"/>
<dbReference type="eggNOG" id="COG0073">
    <property type="taxonomic scope" value="Bacteria"/>
</dbReference>
<dbReference type="eggNOG" id="COG0143">
    <property type="taxonomic scope" value="Bacteria"/>
</dbReference>
<dbReference type="HOGENOM" id="CLU_009710_7_0_4"/>
<dbReference type="Proteomes" id="UP000002287">
    <property type="component" value="Chromosome 1"/>
</dbReference>
<dbReference type="GO" id="GO:0005829">
    <property type="term" value="C:cytosol"/>
    <property type="evidence" value="ECO:0007669"/>
    <property type="project" value="TreeGrafter"/>
</dbReference>
<dbReference type="GO" id="GO:0005524">
    <property type="term" value="F:ATP binding"/>
    <property type="evidence" value="ECO:0007669"/>
    <property type="project" value="UniProtKB-UniRule"/>
</dbReference>
<dbReference type="GO" id="GO:0046872">
    <property type="term" value="F:metal ion binding"/>
    <property type="evidence" value="ECO:0007669"/>
    <property type="project" value="UniProtKB-KW"/>
</dbReference>
<dbReference type="GO" id="GO:0004825">
    <property type="term" value="F:methionine-tRNA ligase activity"/>
    <property type="evidence" value="ECO:0007669"/>
    <property type="project" value="UniProtKB-UniRule"/>
</dbReference>
<dbReference type="GO" id="GO:0000049">
    <property type="term" value="F:tRNA binding"/>
    <property type="evidence" value="ECO:0007669"/>
    <property type="project" value="UniProtKB-KW"/>
</dbReference>
<dbReference type="GO" id="GO:0006431">
    <property type="term" value="P:methionyl-tRNA aminoacylation"/>
    <property type="evidence" value="ECO:0007669"/>
    <property type="project" value="UniProtKB-UniRule"/>
</dbReference>
<dbReference type="CDD" id="cd07957">
    <property type="entry name" value="Anticodon_Ia_Met"/>
    <property type="match status" value="1"/>
</dbReference>
<dbReference type="CDD" id="cd00814">
    <property type="entry name" value="MetRS_core"/>
    <property type="match status" value="1"/>
</dbReference>
<dbReference type="CDD" id="cd02800">
    <property type="entry name" value="tRNA_bind_EcMetRS_like"/>
    <property type="match status" value="1"/>
</dbReference>
<dbReference type="FunFam" id="2.20.28.20:FF:000001">
    <property type="entry name" value="Methionine--tRNA ligase"/>
    <property type="match status" value="1"/>
</dbReference>
<dbReference type="FunFam" id="2.40.50.140:FF:000042">
    <property type="entry name" value="Methionine--tRNA ligase"/>
    <property type="match status" value="1"/>
</dbReference>
<dbReference type="Gene3D" id="3.40.50.620">
    <property type="entry name" value="HUPs"/>
    <property type="match status" value="1"/>
</dbReference>
<dbReference type="Gene3D" id="1.10.730.10">
    <property type="entry name" value="Isoleucyl-tRNA Synthetase, Domain 1"/>
    <property type="match status" value="1"/>
</dbReference>
<dbReference type="Gene3D" id="2.20.28.20">
    <property type="entry name" value="Methionyl-tRNA synthetase, Zn-domain"/>
    <property type="match status" value="1"/>
</dbReference>
<dbReference type="Gene3D" id="2.40.50.140">
    <property type="entry name" value="Nucleic acid-binding proteins"/>
    <property type="match status" value="1"/>
</dbReference>
<dbReference type="HAMAP" id="MF_00098">
    <property type="entry name" value="Met_tRNA_synth_type1"/>
    <property type="match status" value="1"/>
</dbReference>
<dbReference type="InterPro" id="IPR001412">
    <property type="entry name" value="aa-tRNA-synth_I_CS"/>
</dbReference>
<dbReference type="InterPro" id="IPR041872">
    <property type="entry name" value="Anticodon_Met"/>
</dbReference>
<dbReference type="InterPro" id="IPR013155">
    <property type="entry name" value="M/V/L/I-tRNA-synth_anticd-bd"/>
</dbReference>
<dbReference type="InterPro" id="IPR004495">
    <property type="entry name" value="Met-tRNA-synth_bsu_C"/>
</dbReference>
<dbReference type="InterPro" id="IPR023458">
    <property type="entry name" value="Met-tRNA_ligase_1"/>
</dbReference>
<dbReference type="InterPro" id="IPR014758">
    <property type="entry name" value="Met-tRNA_synth"/>
</dbReference>
<dbReference type="InterPro" id="IPR015413">
    <property type="entry name" value="Methionyl/Leucyl_tRNA_Synth"/>
</dbReference>
<dbReference type="InterPro" id="IPR033911">
    <property type="entry name" value="MetRS_core"/>
</dbReference>
<dbReference type="InterPro" id="IPR029038">
    <property type="entry name" value="MetRS_Zn"/>
</dbReference>
<dbReference type="InterPro" id="IPR012340">
    <property type="entry name" value="NA-bd_OB-fold"/>
</dbReference>
<dbReference type="InterPro" id="IPR014729">
    <property type="entry name" value="Rossmann-like_a/b/a_fold"/>
</dbReference>
<dbReference type="InterPro" id="IPR002547">
    <property type="entry name" value="tRNA-bd_dom"/>
</dbReference>
<dbReference type="InterPro" id="IPR009080">
    <property type="entry name" value="tRNAsynth_Ia_anticodon-bd"/>
</dbReference>
<dbReference type="NCBIfam" id="TIGR00398">
    <property type="entry name" value="metG"/>
    <property type="match status" value="1"/>
</dbReference>
<dbReference type="NCBIfam" id="TIGR00399">
    <property type="entry name" value="metG_C_term"/>
    <property type="match status" value="1"/>
</dbReference>
<dbReference type="NCBIfam" id="NF001100">
    <property type="entry name" value="PRK00133.1"/>
    <property type="match status" value="1"/>
</dbReference>
<dbReference type="PANTHER" id="PTHR45765">
    <property type="entry name" value="METHIONINE--TRNA LIGASE"/>
    <property type="match status" value="1"/>
</dbReference>
<dbReference type="PANTHER" id="PTHR45765:SF1">
    <property type="entry name" value="METHIONINE--TRNA LIGASE, CYTOPLASMIC"/>
    <property type="match status" value="1"/>
</dbReference>
<dbReference type="Pfam" id="PF08264">
    <property type="entry name" value="Anticodon_1"/>
    <property type="match status" value="1"/>
</dbReference>
<dbReference type="Pfam" id="PF09334">
    <property type="entry name" value="tRNA-synt_1g"/>
    <property type="match status" value="1"/>
</dbReference>
<dbReference type="Pfam" id="PF01588">
    <property type="entry name" value="tRNA_bind"/>
    <property type="match status" value="1"/>
</dbReference>
<dbReference type="PRINTS" id="PR01041">
    <property type="entry name" value="TRNASYNTHMET"/>
</dbReference>
<dbReference type="SUPFAM" id="SSF47323">
    <property type="entry name" value="Anticodon-binding domain of a subclass of class I aminoacyl-tRNA synthetases"/>
    <property type="match status" value="1"/>
</dbReference>
<dbReference type="SUPFAM" id="SSF57770">
    <property type="entry name" value="Methionyl-tRNA synthetase (MetRS), Zn-domain"/>
    <property type="match status" value="1"/>
</dbReference>
<dbReference type="SUPFAM" id="SSF50249">
    <property type="entry name" value="Nucleic acid-binding proteins"/>
    <property type="match status" value="1"/>
</dbReference>
<dbReference type="SUPFAM" id="SSF52374">
    <property type="entry name" value="Nucleotidylyl transferase"/>
    <property type="match status" value="1"/>
</dbReference>
<dbReference type="PROSITE" id="PS00178">
    <property type="entry name" value="AA_TRNA_LIGASE_I"/>
    <property type="match status" value="1"/>
</dbReference>
<dbReference type="PROSITE" id="PS50886">
    <property type="entry name" value="TRBD"/>
    <property type="match status" value="1"/>
</dbReference>